<accession>P0A8I8</accession>
<accession>P05850</accession>
<name>RLMH_ECOLI</name>
<proteinExistence type="evidence at protein level"/>
<reference key="1">
    <citation type="journal article" date="1986" name="Eur. J. Biochem.">
        <title>Nucleotide sequence of the pbpA gene and characteristics of the deduced amino acid sequence of penicillin-binding protein 2 of Escherichia coli K12.</title>
        <authorList>
            <person name="Asoh S."/>
            <person name="Matsuzawa H."/>
            <person name="Ishino F."/>
            <person name="Strominger J.L."/>
            <person name="Matsuhashi M."/>
            <person name="Ohta T."/>
        </authorList>
    </citation>
    <scope>NUCLEOTIDE SEQUENCE [GENOMIC DNA]</scope>
    <source>
        <strain>K12</strain>
    </source>
</reference>
<reference key="2">
    <citation type="journal article" date="1996" name="DNA Res.">
        <title>A 718-kb DNA sequence of the Escherichia coli K-12 genome corresponding to the 12.7-28.0 min region on the linkage map.</title>
        <authorList>
            <person name="Oshima T."/>
            <person name="Aiba H."/>
            <person name="Baba T."/>
            <person name="Fujita K."/>
            <person name="Hayashi K."/>
            <person name="Honjo A."/>
            <person name="Ikemoto K."/>
            <person name="Inada T."/>
            <person name="Itoh T."/>
            <person name="Kajihara M."/>
            <person name="Kanai K."/>
            <person name="Kashimoto K."/>
            <person name="Kimura S."/>
            <person name="Kitagawa M."/>
            <person name="Makino K."/>
            <person name="Masuda S."/>
            <person name="Miki T."/>
            <person name="Mizobuchi K."/>
            <person name="Mori H."/>
            <person name="Motomura K."/>
            <person name="Nakamura Y."/>
            <person name="Nashimoto H."/>
            <person name="Nishio Y."/>
            <person name="Saito N."/>
            <person name="Sampei G."/>
            <person name="Seki Y."/>
            <person name="Tagami H."/>
            <person name="Takemoto K."/>
            <person name="Wada C."/>
            <person name="Yamamoto Y."/>
            <person name="Yano M."/>
            <person name="Horiuchi T."/>
        </authorList>
    </citation>
    <scope>NUCLEOTIDE SEQUENCE [LARGE SCALE GENOMIC DNA]</scope>
    <source>
        <strain>K12 / W3110 / ATCC 27325 / DSM 5911</strain>
    </source>
</reference>
<reference key="3">
    <citation type="submission" date="1997-01" db="EMBL/GenBank/DDBJ databases">
        <title>Sequence of minutes 4-25 of Escherichia coli.</title>
        <authorList>
            <person name="Chung E."/>
            <person name="Allen E."/>
            <person name="Araujo R."/>
            <person name="Aparicio A.M."/>
            <person name="Davis K."/>
            <person name="Duncan M."/>
            <person name="Federspiel N."/>
            <person name="Hyman R."/>
            <person name="Kalman S."/>
            <person name="Komp C."/>
            <person name="Kurdi O."/>
            <person name="Lew H."/>
            <person name="Lin D."/>
            <person name="Namath A."/>
            <person name="Oefner P."/>
            <person name="Roberts D."/>
            <person name="Schramm S."/>
            <person name="Davis R.W."/>
        </authorList>
    </citation>
    <scope>NUCLEOTIDE SEQUENCE [LARGE SCALE GENOMIC DNA]</scope>
    <source>
        <strain>K12 / MG1655 / ATCC 47076</strain>
    </source>
</reference>
<reference key="4">
    <citation type="journal article" date="1997" name="Science">
        <title>The complete genome sequence of Escherichia coli K-12.</title>
        <authorList>
            <person name="Blattner F.R."/>
            <person name="Plunkett G. III"/>
            <person name="Bloch C.A."/>
            <person name="Perna N.T."/>
            <person name="Burland V."/>
            <person name="Riley M."/>
            <person name="Collado-Vides J."/>
            <person name="Glasner J.D."/>
            <person name="Rode C.K."/>
            <person name="Mayhew G.F."/>
            <person name="Gregor J."/>
            <person name="Davis N.W."/>
            <person name="Kirkpatrick H.A."/>
            <person name="Goeden M.A."/>
            <person name="Rose D.J."/>
            <person name="Mau B."/>
            <person name="Shao Y."/>
        </authorList>
    </citation>
    <scope>NUCLEOTIDE SEQUENCE [LARGE SCALE GENOMIC DNA]</scope>
    <source>
        <strain>K12 / MG1655 / ATCC 47076</strain>
    </source>
</reference>
<reference key="5">
    <citation type="journal article" date="2006" name="Mol. Syst. Biol.">
        <title>Highly accurate genome sequences of Escherichia coli K-12 strains MG1655 and W3110.</title>
        <authorList>
            <person name="Hayashi K."/>
            <person name="Morooka N."/>
            <person name="Yamamoto Y."/>
            <person name="Fujita K."/>
            <person name="Isono K."/>
            <person name="Choi S."/>
            <person name="Ohtsubo E."/>
            <person name="Baba T."/>
            <person name="Wanner B.L."/>
            <person name="Mori H."/>
            <person name="Horiuchi T."/>
        </authorList>
    </citation>
    <scope>NUCLEOTIDE SEQUENCE [LARGE SCALE GENOMIC DNA]</scope>
    <source>
        <strain>K12 / W3110 / ATCC 27325 / DSM 5911</strain>
    </source>
</reference>
<reference key="6">
    <citation type="journal article" date="2008" name="RNA">
        <title>Identification of pseudouridine methyltransferase in Escherichia coli.</title>
        <authorList>
            <person name="Ero R."/>
            <person name="Peil L."/>
            <person name="Liiv A."/>
            <person name="Remme J."/>
        </authorList>
    </citation>
    <scope>FUNCTION AS A METHYLTRANSFERASE</scope>
    <scope>CATALYTIC ACTIVITY</scope>
    <source>
        <strain>K12 / MG1655 / ATCC 47076</strain>
    </source>
</reference>
<reference key="7">
    <citation type="journal article" date="2008" name="RNA">
        <title>YbeA is the m3Psi methyltransferase RlmH that targets nucleotide 1915 in 23S rRNA.</title>
        <authorList>
            <person name="Purta E."/>
            <person name="Kaminska K.H."/>
            <person name="Kasprzak J.M."/>
            <person name="Bujnicki J.M."/>
            <person name="Douthwaite S."/>
        </authorList>
    </citation>
    <scope>FUNCTION AS A METHYLTRANSFERASE</scope>
    <scope>CATALYTIC ACTIVITY</scope>
    <scope>3D-STRUCTURE MODELING</scope>
</reference>
<reference key="8">
    <citation type="journal article" date="2010" name="RNA">
        <title>Specificity and kinetics of 23S rRNA modification enzymes RlmH and RluD.</title>
        <authorList>
            <person name="Ero R."/>
            <person name="Leppik M."/>
            <person name="Liiv A."/>
            <person name="Remme J."/>
        </authorList>
    </citation>
    <scope>FUNCTION</scope>
    <scope>CATALYTIC ACTIVITY</scope>
    <scope>BIOPHYSICOCHEMICAL PROPERTIES</scope>
</reference>
<reference evidence="10" key="9">
    <citation type="submission" date="2005-01" db="PDB data bank">
        <title>Structure of ybeA from E.coli.</title>
        <authorList>
            <consortium name="Northeast structural genomics consortium (NESG)"/>
        </authorList>
    </citation>
    <scope>X-RAY CRYSTALLOGRAPHY (1.68 ANGSTROMS)</scope>
    <scope>SUBUNIT</scope>
</reference>
<reference evidence="11 12" key="10">
    <citation type="journal article" date="2017" name="Sci. Rep.">
        <title>Small methyltransferase RlmH assembles a composite active site to methylate a ribosomal pseudouridine.</title>
        <authorList>
            <person name="Koh C.S."/>
            <person name="Madireddy R."/>
            <person name="Beane T.J."/>
            <person name="Zamore P.D."/>
            <person name="Korostelev A.A."/>
        </authorList>
    </citation>
    <scope>X-RAY CRYSTALLOGRAPHY (2.10 ANGSTROMS) OF 2-155 IN COMPLEX WITH S-ADENOSYL-L-METHIONINE</scope>
    <scope>FUNCTION</scope>
    <scope>CATALYTIC ACTIVITY</scope>
    <scope>BIOPHYSICOCHEMICAL PROPERTIES</scope>
    <scope>SUBUNIT</scope>
    <scope>MUTAGENESIS OF HIS-129; GLU-138; ARG-142; TYR-152; HIS-153 AND ARG-154</scope>
</reference>
<feature type="chain" id="PRO_0000198115" description="Ribosomal RNA large subunit methyltransferase H">
    <location>
        <begin position="1"/>
        <end position="155"/>
    </location>
</feature>
<feature type="binding site" evidence="1 5 11">
    <location>
        <position position="72"/>
    </location>
    <ligand>
        <name>S-adenosyl-L-methionine</name>
        <dbReference type="ChEBI" id="CHEBI:59789"/>
    </ligand>
</feature>
<feature type="binding site" evidence="1 5 11">
    <location>
        <position position="103"/>
    </location>
    <ligand>
        <name>S-adenosyl-L-methionine</name>
        <dbReference type="ChEBI" id="CHEBI:59789"/>
    </ligand>
</feature>
<feature type="binding site" evidence="1 5 11">
    <location>
        <begin position="122"/>
        <end position="127"/>
    </location>
    <ligand>
        <name>S-adenosyl-L-methionine</name>
        <dbReference type="ChEBI" id="CHEBI:59789"/>
    </ligand>
</feature>
<feature type="mutagenesis site" description="Decrease in activity." evidence="5">
    <original>H</original>
    <variation>A</variation>
    <location>
        <position position="129"/>
    </location>
</feature>
<feature type="mutagenesis site" description="Loss of activity." evidence="5">
    <original>E</original>
    <variation>A</variation>
    <variation>Q</variation>
    <location>
        <position position="138"/>
    </location>
</feature>
<feature type="mutagenesis site" description="Decrease in activity." evidence="5">
    <original>R</original>
    <variation>A</variation>
    <location>
        <position position="142"/>
    </location>
</feature>
<feature type="mutagenesis site" description="Loss of activity." evidence="5">
    <original>Y</original>
    <variation>F</variation>
    <location>
        <position position="152"/>
    </location>
</feature>
<feature type="mutagenesis site" description="Loss of activity." evidence="5">
    <original>H</original>
    <variation>F</variation>
    <location>
        <position position="153"/>
    </location>
</feature>
<feature type="mutagenesis site" description="Loss of activity. Impairs ribosome binding." evidence="5">
    <original>R</original>
    <variation>A</variation>
    <location>
        <position position="154"/>
    </location>
</feature>
<feature type="strand" evidence="13">
    <location>
        <begin position="3"/>
        <end position="8"/>
    </location>
</feature>
<feature type="helix" evidence="13">
    <location>
        <begin position="14"/>
        <end position="24"/>
    </location>
</feature>
<feature type="strand" evidence="13">
    <location>
        <begin position="33"/>
        <end position="38"/>
    </location>
</feature>
<feature type="strand" evidence="14">
    <location>
        <begin position="45"/>
        <end position="47"/>
    </location>
</feature>
<feature type="helix" evidence="13">
    <location>
        <begin position="49"/>
        <end position="64"/>
    </location>
</feature>
<feature type="strand" evidence="13">
    <location>
        <begin position="67"/>
        <end position="72"/>
    </location>
</feature>
<feature type="helix" evidence="17">
    <location>
        <begin position="81"/>
        <end position="94"/>
    </location>
</feature>
<feature type="strand" evidence="17">
    <location>
        <begin position="98"/>
        <end position="102"/>
    </location>
</feature>
<feature type="helix" evidence="17">
    <location>
        <begin position="110"/>
        <end position="115"/>
    </location>
</feature>
<feature type="strand" evidence="17">
    <location>
        <begin position="117"/>
        <end position="121"/>
    </location>
</feature>
<feature type="helix" evidence="17">
    <location>
        <begin position="122"/>
        <end position="124"/>
    </location>
</feature>
<feature type="helix" evidence="17">
    <location>
        <begin position="129"/>
        <end position="131"/>
    </location>
</feature>
<feature type="helix" evidence="17">
    <location>
        <begin position="132"/>
        <end position="145"/>
    </location>
</feature>
<feature type="strand" evidence="16">
    <location>
        <begin position="147"/>
        <end position="150"/>
    </location>
</feature>
<feature type="helix" evidence="15">
    <location>
        <begin position="151"/>
        <end position="153"/>
    </location>
</feature>
<dbReference type="EC" id="2.1.1.177" evidence="1 2 3 4 5"/>
<dbReference type="EMBL" id="X04516">
    <property type="protein sequence ID" value="CAA28200.1"/>
    <property type="molecule type" value="Genomic_DNA"/>
</dbReference>
<dbReference type="EMBL" id="U82598">
    <property type="protein sequence ID" value="AAB40836.1"/>
    <property type="molecule type" value="Genomic_DNA"/>
</dbReference>
<dbReference type="EMBL" id="U00096">
    <property type="protein sequence ID" value="AAC73737.1"/>
    <property type="molecule type" value="Genomic_DNA"/>
</dbReference>
<dbReference type="EMBL" id="AP009048">
    <property type="protein sequence ID" value="BAA35283.1"/>
    <property type="molecule type" value="Genomic_DNA"/>
</dbReference>
<dbReference type="PIR" id="B24995">
    <property type="entry name" value="QQECP1"/>
</dbReference>
<dbReference type="RefSeq" id="NP_415169.1">
    <property type="nucleotide sequence ID" value="NC_000913.3"/>
</dbReference>
<dbReference type="RefSeq" id="WP_000776104.1">
    <property type="nucleotide sequence ID" value="NZ_STEB01000031.1"/>
</dbReference>
<dbReference type="PDB" id="1NS5">
    <property type="method" value="X-ray"/>
    <property type="resolution" value="1.68 A"/>
    <property type="chains" value="A/B=1-155"/>
</dbReference>
<dbReference type="PDB" id="5TWJ">
    <property type="method" value="X-ray"/>
    <property type="resolution" value="2.30 A"/>
    <property type="chains" value="A/B/C/D=2-155"/>
</dbReference>
<dbReference type="PDB" id="5TWK">
    <property type="method" value="X-ray"/>
    <property type="resolution" value="2.10 A"/>
    <property type="chains" value="A/B/C/D=2-155"/>
</dbReference>
<dbReference type="PDB" id="5ZYO">
    <property type="method" value="X-ray"/>
    <property type="resolution" value="1.75 A"/>
    <property type="chains" value="A/B/C/D=1-155"/>
</dbReference>
<dbReference type="PDB" id="7CEM">
    <property type="method" value="X-ray"/>
    <property type="resolution" value="2.43 A"/>
    <property type="chains" value="A/B=1-155"/>
</dbReference>
<dbReference type="PDB" id="7CF7">
    <property type="method" value="X-ray"/>
    <property type="resolution" value="1.62 A"/>
    <property type="chains" value="A/B=1-155"/>
</dbReference>
<dbReference type="PDB" id="7CFY">
    <property type="method" value="X-ray"/>
    <property type="resolution" value="2.41 A"/>
    <property type="chains" value="A/B/C/D=1-155"/>
</dbReference>
<dbReference type="PDBsum" id="1NS5"/>
<dbReference type="PDBsum" id="5TWJ"/>
<dbReference type="PDBsum" id="5TWK"/>
<dbReference type="PDBsum" id="5ZYO"/>
<dbReference type="PDBsum" id="7CEM"/>
<dbReference type="PDBsum" id="7CF7"/>
<dbReference type="PDBsum" id="7CFY"/>
<dbReference type="SMR" id="P0A8I8"/>
<dbReference type="BioGRID" id="4259479">
    <property type="interactions" value="57"/>
</dbReference>
<dbReference type="DIP" id="DIP-11357N"/>
<dbReference type="FunCoup" id="P0A8I8">
    <property type="interactions" value="479"/>
</dbReference>
<dbReference type="IntAct" id="P0A8I8">
    <property type="interactions" value="11"/>
</dbReference>
<dbReference type="STRING" id="511145.b0636"/>
<dbReference type="jPOST" id="P0A8I8"/>
<dbReference type="PaxDb" id="511145-b0636"/>
<dbReference type="EnsemblBacteria" id="AAC73737">
    <property type="protein sequence ID" value="AAC73737"/>
    <property type="gene ID" value="b0636"/>
</dbReference>
<dbReference type="GeneID" id="93776846"/>
<dbReference type="GeneID" id="945239"/>
<dbReference type="KEGG" id="ecj:JW0631"/>
<dbReference type="KEGG" id="eco:b0636"/>
<dbReference type="KEGG" id="ecoc:C3026_03180"/>
<dbReference type="PATRIC" id="fig|1411691.4.peg.1632"/>
<dbReference type="EchoBASE" id="EB1234"/>
<dbReference type="eggNOG" id="COG1576">
    <property type="taxonomic scope" value="Bacteria"/>
</dbReference>
<dbReference type="HOGENOM" id="CLU_100552_1_0_6"/>
<dbReference type="InParanoid" id="P0A8I8"/>
<dbReference type="OMA" id="NEPYHHQ"/>
<dbReference type="OrthoDB" id="9806643at2"/>
<dbReference type="PhylomeDB" id="P0A8I8"/>
<dbReference type="BioCyc" id="EcoCyc:EG11254-MONOMER"/>
<dbReference type="BioCyc" id="MetaCyc:EG11254-MONOMER"/>
<dbReference type="BRENDA" id="2.1.1.177">
    <property type="organism ID" value="2026"/>
</dbReference>
<dbReference type="SABIO-RK" id="P0A8I8"/>
<dbReference type="EvolutionaryTrace" id="P0A8I8"/>
<dbReference type="PRO" id="PR:P0A8I8"/>
<dbReference type="Proteomes" id="UP000000625">
    <property type="component" value="Chromosome"/>
</dbReference>
<dbReference type="GO" id="GO:0005737">
    <property type="term" value="C:cytoplasm"/>
    <property type="evidence" value="ECO:0000305"/>
    <property type="project" value="UniProtKB"/>
</dbReference>
<dbReference type="GO" id="GO:0042803">
    <property type="term" value="F:protein homodimerization activity"/>
    <property type="evidence" value="ECO:0000314"/>
    <property type="project" value="EcoCyc"/>
</dbReference>
<dbReference type="GO" id="GO:0043022">
    <property type="term" value="F:ribosome binding"/>
    <property type="evidence" value="ECO:0000303"/>
    <property type="project" value="UniProtKB"/>
</dbReference>
<dbReference type="GO" id="GO:0070038">
    <property type="term" value="F:rRNA (pseudouridine-N3-)-methyltransferase activity"/>
    <property type="evidence" value="ECO:0000314"/>
    <property type="project" value="EcoCyc"/>
</dbReference>
<dbReference type="GO" id="GO:0070475">
    <property type="term" value="P:rRNA base methylation"/>
    <property type="evidence" value="ECO:0000315"/>
    <property type="project" value="EcoCyc"/>
</dbReference>
<dbReference type="GO" id="GO:0031167">
    <property type="term" value="P:rRNA methylation"/>
    <property type="evidence" value="ECO:0000314"/>
    <property type="project" value="UniProtKB"/>
</dbReference>
<dbReference type="CDD" id="cd18081">
    <property type="entry name" value="RlmH-like"/>
    <property type="match status" value="1"/>
</dbReference>
<dbReference type="FunFam" id="3.40.1280.10:FF:000004">
    <property type="entry name" value="Ribosomal RNA large subunit methyltransferase H"/>
    <property type="match status" value="1"/>
</dbReference>
<dbReference type="Gene3D" id="3.40.1280.10">
    <property type="match status" value="1"/>
</dbReference>
<dbReference type="HAMAP" id="MF_00658">
    <property type="entry name" value="23SrRNA_methyltr_H"/>
    <property type="match status" value="1"/>
</dbReference>
<dbReference type="InterPro" id="IPR029028">
    <property type="entry name" value="Alpha/beta_knot_MTases"/>
</dbReference>
<dbReference type="InterPro" id="IPR003742">
    <property type="entry name" value="RlmH-like"/>
</dbReference>
<dbReference type="InterPro" id="IPR029026">
    <property type="entry name" value="tRNA_m1G_MTases_N"/>
</dbReference>
<dbReference type="NCBIfam" id="NF000984">
    <property type="entry name" value="PRK00103.1-1"/>
    <property type="match status" value="1"/>
</dbReference>
<dbReference type="NCBIfam" id="NF000986">
    <property type="entry name" value="PRK00103.1-4"/>
    <property type="match status" value="1"/>
</dbReference>
<dbReference type="NCBIfam" id="TIGR00246">
    <property type="entry name" value="tRNA_RlmH_YbeA"/>
    <property type="match status" value="1"/>
</dbReference>
<dbReference type="PANTHER" id="PTHR33603">
    <property type="entry name" value="METHYLTRANSFERASE"/>
    <property type="match status" value="1"/>
</dbReference>
<dbReference type="PANTHER" id="PTHR33603:SF1">
    <property type="entry name" value="RIBOSOMAL RNA LARGE SUBUNIT METHYLTRANSFERASE H"/>
    <property type="match status" value="1"/>
</dbReference>
<dbReference type="Pfam" id="PF02590">
    <property type="entry name" value="SPOUT_MTase"/>
    <property type="match status" value="1"/>
</dbReference>
<dbReference type="PIRSF" id="PIRSF004505">
    <property type="entry name" value="MT_bac"/>
    <property type="match status" value="1"/>
</dbReference>
<dbReference type="SUPFAM" id="SSF75217">
    <property type="entry name" value="alpha/beta knot"/>
    <property type="match status" value="1"/>
</dbReference>
<comment type="function">
    <text evidence="2 3 4 5">Specifically methylates the pseudouridine at position 1915 (m3Psi1915) in 23S rRNA. Specific for fully assembled 70S ribosomes.</text>
</comment>
<comment type="catalytic activity">
    <reaction evidence="1 2 3 4 5">
        <text>pseudouridine(1915) in 23S rRNA + S-adenosyl-L-methionine = N(3)-methylpseudouridine(1915) in 23S rRNA + S-adenosyl-L-homocysteine + H(+)</text>
        <dbReference type="Rhea" id="RHEA:42752"/>
        <dbReference type="Rhea" id="RHEA-COMP:10221"/>
        <dbReference type="Rhea" id="RHEA-COMP:10222"/>
        <dbReference type="ChEBI" id="CHEBI:15378"/>
        <dbReference type="ChEBI" id="CHEBI:57856"/>
        <dbReference type="ChEBI" id="CHEBI:59789"/>
        <dbReference type="ChEBI" id="CHEBI:65314"/>
        <dbReference type="ChEBI" id="CHEBI:74486"/>
        <dbReference type="EC" id="2.1.1.177"/>
    </reaction>
</comment>
<comment type="biophysicochemical properties">
    <kinetics>
        <KM evidence="4">0.51 uM for 70S ribosome</KM>
        <KM evidence="5">0.3 uM for 70S ribosome</KM>
        <KM evidence="4">27 uM for S-adenosyl-L-methionine</KM>
        <text evidence="4 5">kcat is 5-6 min(-1) (PubMed:20817755). kcat is 2.5 min(-1) (PubMed:28428565).</text>
    </kinetics>
</comment>
<comment type="subunit">
    <text evidence="1 5 6">Homodimer.</text>
</comment>
<comment type="interaction">
    <interactant intactId="EBI-560148">
        <id>P0A8I8</id>
    </interactant>
    <interactant intactId="EBI-543439">
        <id>P0A7V0</id>
        <label>rpsB</label>
    </interactant>
    <organismsDiffer>false</organismsDiffer>
    <experiments>2</experiments>
</comment>
<comment type="subcellular location">
    <subcellularLocation>
        <location evidence="1 9">Cytoplasm</location>
    </subcellularLocation>
</comment>
<comment type="similarity">
    <text evidence="1 9">Belongs to the RNA methyltransferase RlmH family.</text>
</comment>
<keyword id="KW-0002">3D-structure</keyword>
<keyword id="KW-0963">Cytoplasm</keyword>
<keyword id="KW-0489">Methyltransferase</keyword>
<keyword id="KW-1185">Reference proteome</keyword>
<keyword id="KW-0698">rRNA processing</keyword>
<keyword id="KW-0949">S-adenosyl-L-methionine</keyword>
<keyword id="KW-0808">Transferase</keyword>
<organism>
    <name type="scientific">Escherichia coli (strain K12)</name>
    <dbReference type="NCBI Taxonomy" id="83333"/>
    <lineage>
        <taxon>Bacteria</taxon>
        <taxon>Pseudomonadati</taxon>
        <taxon>Pseudomonadota</taxon>
        <taxon>Gammaproteobacteria</taxon>
        <taxon>Enterobacterales</taxon>
        <taxon>Enterobacteriaceae</taxon>
        <taxon>Escherichia</taxon>
    </lineage>
</organism>
<evidence type="ECO:0000255" key="1">
    <source>
        <dbReference type="HAMAP-Rule" id="MF_00658"/>
    </source>
</evidence>
<evidence type="ECO:0000269" key="2">
    <source>
    </source>
</evidence>
<evidence type="ECO:0000269" key="3">
    <source>
    </source>
</evidence>
<evidence type="ECO:0000269" key="4">
    <source>
    </source>
</evidence>
<evidence type="ECO:0000269" key="5">
    <source>
    </source>
</evidence>
<evidence type="ECO:0000269" key="6">
    <source ref="9"/>
</evidence>
<evidence type="ECO:0000303" key="7">
    <source>
    </source>
</evidence>
<evidence type="ECO:0000303" key="8">
    <source>
    </source>
</evidence>
<evidence type="ECO:0000305" key="9"/>
<evidence type="ECO:0007744" key="10">
    <source>
        <dbReference type="PDB" id="1NS5"/>
    </source>
</evidence>
<evidence type="ECO:0007744" key="11">
    <source>
        <dbReference type="PDB" id="5TWJ"/>
    </source>
</evidence>
<evidence type="ECO:0007744" key="12">
    <source>
        <dbReference type="PDB" id="5TWK"/>
    </source>
</evidence>
<evidence type="ECO:0007829" key="13">
    <source>
        <dbReference type="PDB" id="1NS5"/>
    </source>
</evidence>
<evidence type="ECO:0007829" key="14">
    <source>
        <dbReference type="PDB" id="5TWJ"/>
    </source>
</evidence>
<evidence type="ECO:0007829" key="15">
    <source>
        <dbReference type="PDB" id="5TWK"/>
    </source>
</evidence>
<evidence type="ECO:0007829" key="16">
    <source>
        <dbReference type="PDB" id="7CEM"/>
    </source>
</evidence>
<evidence type="ECO:0007829" key="17">
    <source>
        <dbReference type="PDB" id="7CF7"/>
    </source>
</evidence>
<gene>
    <name evidence="1 7 8" type="primary">rlmH</name>
    <name type="synonym">ybeA</name>
    <name type="ordered locus">b0636</name>
    <name type="ordered locus">JW0631</name>
</gene>
<protein>
    <recommendedName>
        <fullName evidence="1 9">Ribosomal RNA large subunit methyltransferase H</fullName>
        <ecNumber evidence="1 2 3 4 5">2.1.1.177</ecNumber>
    </recommendedName>
    <alternativeName>
        <fullName evidence="1 9">23S rRNA (pseudouridine1915-N3)-methyltransferase</fullName>
    </alternativeName>
    <alternativeName>
        <fullName evidence="1 9">23S rRNA m3Psi1915 methyltransferase</fullName>
    </alternativeName>
    <alternativeName>
        <fullName evidence="1 9">rRNA (pseudouridine-N3-)-methyltransferase RlmH</fullName>
    </alternativeName>
</protein>
<sequence>MKLQLVAVGTKMPDWVQTGFTEYLRRFPKDMPFELIEIPAGKRGKNADIKRILDKEGEQMLAAAGKNRIVTLDIPGKPWDTPQLAAELERWKLDGRDVSLLIGGPEGLSPACKAAAEQSWSLSALTLPHPLVRVLVAESLYRAWSITTNHPYHRE</sequence>